<dbReference type="EMBL" id="CU329672">
    <property type="protein sequence ID" value="CAB58372.1"/>
    <property type="molecule type" value="Genomic_DNA"/>
</dbReference>
<dbReference type="PIR" id="T41696">
    <property type="entry name" value="T41696"/>
</dbReference>
<dbReference type="RefSeq" id="NP_587862.1">
    <property type="nucleotide sequence ID" value="NM_001022855.2"/>
</dbReference>
<dbReference type="SMR" id="Q9USG8"/>
<dbReference type="BioGRID" id="276040">
    <property type="interactions" value="2"/>
</dbReference>
<dbReference type="STRING" id="284812.Q9USG8"/>
<dbReference type="iPTMnet" id="Q9USG8"/>
<dbReference type="PaxDb" id="4896-SPCP31B10.06.1"/>
<dbReference type="EnsemblFungi" id="SPCP31B10.06.1">
    <property type="protein sequence ID" value="SPCP31B10.06.1:pep"/>
    <property type="gene ID" value="SPCP31B10.06"/>
</dbReference>
<dbReference type="GeneID" id="2539477"/>
<dbReference type="KEGG" id="spo:2539477"/>
<dbReference type="PomBase" id="SPCP31B10.06">
    <property type="gene designation" value="mug190"/>
</dbReference>
<dbReference type="VEuPathDB" id="FungiDB:SPCP31B10.06"/>
<dbReference type="eggNOG" id="KOG1012">
    <property type="taxonomic scope" value="Eukaryota"/>
</dbReference>
<dbReference type="HOGENOM" id="CLU_002125_2_0_1"/>
<dbReference type="InParanoid" id="Q9USG8"/>
<dbReference type="OMA" id="WDSDRNT"/>
<dbReference type="PhylomeDB" id="Q9USG8"/>
<dbReference type="PRO" id="PR:Q9USG8"/>
<dbReference type="Proteomes" id="UP000002485">
    <property type="component" value="Chromosome III"/>
</dbReference>
<dbReference type="GO" id="GO:0032541">
    <property type="term" value="C:cortical endoplasmic reticulum"/>
    <property type="evidence" value="ECO:0000266"/>
    <property type="project" value="PomBase"/>
</dbReference>
<dbReference type="GO" id="GO:0005829">
    <property type="term" value="C:cytosol"/>
    <property type="evidence" value="ECO:0007005"/>
    <property type="project" value="PomBase"/>
</dbReference>
<dbReference type="GO" id="GO:0005783">
    <property type="term" value="C:endoplasmic reticulum"/>
    <property type="evidence" value="ECO:0007005"/>
    <property type="project" value="PomBase"/>
</dbReference>
<dbReference type="GO" id="GO:0005789">
    <property type="term" value="C:endoplasmic reticulum membrane"/>
    <property type="evidence" value="ECO:0007669"/>
    <property type="project" value="UniProtKB-SubCell"/>
</dbReference>
<dbReference type="GO" id="GO:0031965">
    <property type="term" value="C:nuclear membrane"/>
    <property type="evidence" value="ECO:0007669"/>
    <property type="project" value="UniProtKB-SubCell"/>
</dbReference>
<dbReference type="GO" id="GO:0005634">
    <property type="term" value="C:nucleus"/>
    <property type="evidence" value="ECO:0007005"/>
    <property type="project" value="PomBase"/>
</dbReference>
<dbReference type="GO" id="GO:0005886">
    <property type="term" value="C:plasma membrane"/>
    <property type="evidence" value="ECO:0000266"/>
    <property type="project" value="PomBase"/>
</dbReference>
<dbReference type="GO" id="GO:0005816">
    <property type="term" value="C:spindle pole body"/>
    <property type="evidence" value="ECO:0007669"/>
    <property type="project" value="UniProtKB-SubCell"/>
</dbReference>
<dbReference type="GO" id="GO:0046872">
    <property type="term" value="F:metal ion binding"/>
    <property type="evidence" value="ECO:0007669"/>
    <property type="project" value="UniProtKB-KW"/>
</dbReference>
<dbReference type="GO" id="GO:0005543">
    <property type="term" value="F:phospholipid binding"/>
    <property type="evidence" value="ECO:0000255"/>
    <property type="project" value="PomBase"/>
</dbReference>
<dbReference type="GO" id="GO:0043495">
    <property type="term" value="F:protein-membrane adaptor activity"/>
    <property type="evidence" value="ECO:0000305"/>
    <property type="project" value="PomBase"/>
</dbReference>
<dbReference type="GO" id="GO:0061817">
    <property type="term" value="P:endoplasmic reticulum-plasma membrane tethering"/>
    <property type="evidence" value="ECO:0000266"/>
    <property type="project" value="PomBase"/>
</dbReference>
<dbReference type="GO" id="GO:0006869">
    <property type="term" value="P:lipid transport"/>
    <property type="evidence" value="ECO:0007669"/>
    <property type="project" value="UniProtKB-KW"/>
</dbReference>
<dbReference type="GO" id="GO:0051321">
    <property type="term" value="P:meiotic cell cycle"/>
    <property type="evidence" value="ECO:0007669"/>
    <property type="project" value="UniProtKB-KW"/>
</dbReference>
<dbReference type="CDD" id="cd04041">
    <property type="entry name" value="C2A_fungal"/>
    <property type="match status" value="1"/>
</dbReference>
<dbReference type="CDD" id="cd04052">
    <property type="entry name" value="C2B_Tricalbin-like"/>
    <property type="match status" value="1"/>
</dbReference>
<dbReference type="CDD" id="cd21676">
    <property type="entry name" value="SMP_Mug190"/>
    <property type="match status" value="1"/>
</dbReference>
<dbReference type="Gene3D" id="2.60.40.150">
    <property type="entry name" value="C2 domain"/>
    <property type="match status" value="2"/>
</dbReference>
<dbReference type="InterPro" id="IPR000008">
    <property type="entry name" value="C2_dom"/>
</dbReference>
<dbReference type="InterPro" id="IPR035892">
    <property type="entry name" value="C2_domain_sf"/>
</dbReference>
<dbReference type="InterPro" id="IPR037767">
    <property type="entry name" value="C2A_Mug190-like"/>
</dbReference>
<dbReference type="InterPro" id="IPR037765">
    <property type="entry name" value="C2B_Tricalbin"/>
</dbReference>
<dbReference type="InterPro" id="IPR031468">
    <property type="entry name" value="SMP_LBD"/>
</dbReference>
<dbReference type="PANTHER" id="PTHR47348">
    <property type="entry name" value="MEIOTICALLY UP-REGULATED GENE 190 PROTEIN"/>
    <property type="match status" value="1"/>
</dbReference>
<dbReference type="PANTHER" id="PTHR47348:SF3">
    <property type="entry name" value="MEIOTICALLY UP-REGULATED GENE 190 PROTEIN"/>
    <property type="match status" value="1"/>
</dbReference>
<dbReference type="Pfam" id="PF00168">
    <property type="entry name" value="C2"/>
    <property type="match status" value="2"/>
</dbReference>
<dbReference type="Pfam" id="PF25331">
    <property type="entry name" value="C2_Mug190_3rd"/>
    <property type="match status" value="1"/>
</dbReference>
<dbReference type="SMART" id="SM00239">
    <property type="entry name" value="C2"/>
    <property type="match status" value="2"/>
</dbReference>
<dbReference type="SUPFAM" id="SSF49562">
    <property type="entry name" value="C2 domain (Calcium/lipid-binding domain, CaLB)"/>
    <property type="match status" value="2"/>
</dbReference>
<dbReference type="PROSITE" id="PS50004">
    <property type="entry name" value="C2"/>
    <property type="match status" value="2"/>
</dbReference>
<dbReference type="PROSITE" id="PS51847">
    <property type="entry name" value="SMP"/>
    <property type="match status" value="1"/>
</dbReference>
<proteinExistence type="evidence at protein level"/>
<comment type="function">
    <text evidence="5">Has a role in meiosis.</text>
</comment>
<comment type="cofactor">
    <cofactor evidence="2">
        <name>Ca(2+)</name>
        <dbReference type="ChEBI" id="CHEBI:29108"/>
    </cofactor>
    <text evidence="2">Binds 3 Ca(2+) ions per C2 domain.</text>
</comment>
<comment type="subcellular location">
    <subcellularLocation>
        <location evidence="6">Cytoplasm</location>
    </subcellularLocation>
    <subcellularLocation>
        <location evidence="6">Endoplasmic reticulum membrane</location>
        <topology evidence="6">Single-pass membrane protein</topology>
    </subcellularLocation>
    <subcellularLocation>
        <location evidence="6">Nucleus membrane</location>
        <topology evidence="6">Single-pass membrane protein</topology>
    </subcellularLocation>
    <subcellularLocation>
        <location evidence="6">Cytoplasm</location>
        <location evidence="6">Cytoskeleton</location>
        <location evidence="6">Microtubule organizing center</location>
        <location evidence="6">Spindle pole body</location>
    </subcellularLocation>
</comment>
<reference key="1">
    <citation type="journal article" date="2002" name="Nature">
        <title>The genome sequence of Schizosaccharomyces pombe.</title>
        <authorList>
            <person name="Wood V."/>
            <person name="Gwilliam R."/>
            <person name="Rajandream M.A."/>
            <person name="Lyne M.H."/>
            <person name="Lyne R."/>
            <person name="Stewart A."/>
            <person name="Sgouros J.G."/>
            <person name="Peat N."/>
            <person name="Hayles J."/>
            <person name="Baker S.G."/>
            <person name="Basham D."/>
            <person name="Bowman S."/>
            <person name="Brooks K."/>
            <person name="Brown D."/>
            <person name="Brown S."/>
            <person name="Chillingworth T."/>
            <person name="Churcher C.M."/>
            <person name="Collins M."/>
            <person name="Connor R."/>
            <person name="Cronin A."/>
            <person name="Davis P."/>
            <person name="Feltwell T."/>
            <person name="Fraser A."/>
            <person name="Gentles S."/>
            <person name="Goble A."/>
            <person name="Hamlin N."/>
            <person name="Harris D.E."/>
            <person name="Hidalgo J."/>
            <person name="Hodgson G."/>
            <person name="Holroyd S."/>
            <person name="Hornsby T."/>
            <person name="Howarth S."/>
            <person name="Huckle E.J."/>
            <person name="Hunt S."/>
            <person name="Jagels K."/>
            <person name="James K.D."/>
            <person name="Jones L."/>
            <person name="Jones M."/>
            <person name="Leather S."/>
            <person name="McDonald S."/>
            <person name="McLean J."/>
            <person name="Mooney P."/>
            <person name="Moule S."/>
            <person name="Mungall K.L."/>
            <person name="Murphy L.D."/>
            <person name="Niblett D."/>
            <person name="Odell C."/>
            <person name="Oliver K."/>
            <person name="O'Neil S."/>
            <person name="Pearson D."/>
            <person name="Quail M.A."/>
            <person name="Rabbinowitsch E."/>
            <person name="Rutherford K.M."/>
            <person name="Rutter S."/>
            <person name="Saunders D."/>
            <person name="Seeger K."/>
            <person name="Sharp S."/>
            <person name="Skelton J."/>
            <person name="Simmonds M.N."/>
            <person name="Squares R."/>
            <person name="Squares S."/>
            <person name="Stevens K."/>
            <person name="Taylor K."/>
            <person name="Taylor R.G."/>
            <person name="Tivey A."/>
            <person name="Walsh S.V."/>
            <person name="Warren T."/>
            <person name="Whitehead S."/>
            <person name="Woodward J.R."/>
            <person name="Volckaert G."/>
            <person name="Aert R."/>
            <person name="Robben J."/>
            <person name="Grymonprez B."/>
            <person name="Weltjens I."/>
            <person name="Vanstreels E."/>
            <person name="Rieger M."/>
            <person name="Schaefer M."/>
            <person name="Mueller-Auer S."/>
            <person name="Gabel C."/>
            <person name="Fuchs M."/>
            <person name="Duesterhoeft A."/>
            <person name="Fritzc C."/>
            <person name="Holzer E."/>
            <person name="Moestl D."/>
            <person name="Hilbert H."/>
            <person name="Borzym K."/>
            <person name="Langer I."/>
            <person name="Beck A."/>
            <person name="Lehrach H."/>
            <person name="Reinhardt R."/>
            <person name="Pohl T.M."/>
            <person name="Eger P."/>
            <person name="Zimmermann W."/>
            <person name="Wedler H."/>
            <person name="Wambutt R."/>
            <person name="Purnelle B."/>
            <person name="Goffeau A."/>
            <person name="Cadieu E."/>
            <person name="Dreano S."/>
            <person name="Gloux S."/>
            <person name="Lelaure V."/>
            <person name="Mottier S."/>
            <person name="Galibert F."/>
            <person name="Aves S.J."/>
            <person name="Xiang Z."/>
            <person name="Hunt C."/>
            <person name="Moore K."/>
            <person name="Hurst S.M."/>
            <person name="Lucas M."/>
            <person name="Rochet M."/>
            <person name="Gaillardin C."/>
            <person name="Tallada V.A."/>
            <person name="Garzon A."/>
            <person name="Thode G."/>
            <person name="Daga R.R."/>
            <person name="Cruzado L."/>
            <person name="Jimenez J."/>
            <person name="Sanchez M."/>
            <person name="del Rey F."/>
            <person name="Benito J."/>
            <person name="Dominguez A."/>
            <person name="Revuelta J.L."/>
            <person name="Moreno S."/>
            <person name="Armstrong J."/>
            <person name="Forsburg S.L."/>
            <person name="Cerutti L."/>
            <person name="Lowe T."/>
            <person name="McCombie W.R."/>
            <person name="Paulsen I."/>
            <person name="Potashkin J."/>
            <person name="Shpakovski G.V."/>
            <person name="Ussery D."/>
            <person name="Barrell B.G."/>
            <person name="Nurse P."/>
        </authorList>
    </citation>
    <scope>NUCLEOTIDE SEQUENCE [LARGE SCALE GENOMIC DNA]</scope>
    <source>
        <strain>972 / ATCC 24843</strain>
    </source>
</reference>
<reference key="2">
    <citation type="journal article" date="2005" name="Curr. Biol.">
        <title>A large-scale screen in S. pombe identifies seven novel genes required for critical meiotic events.</title>
        <authorList>
            <person name="Martin-Castellanos C."/>
            <person name="Blanco M."/>
            <person name="Rozalen A.E."/>
            <person name="Perez-Hidalgo L."/>
            <person name="Garcia A.I."/>
            <person name="Conde F."/>
            <person name="Mata J."/>
            <person name="Ellermeier C."/>
            <person name="Davis L."/>
            <person name="San-Segundo P."/>
            <person name="Smith G.R."/>
            <person name="Moreno S."/>
        </authorList>
    </citation>
    <scope>FUNCTION IN MEIOSIS</scope>
</reference>
<reference key="3">
    <citation type="journal article" date="2006" name="Nat. Biotechnol.">
        <title>ORFeome cloning and global analysis of protein localization in the fission yeast Schizosaccharomyces pombe.</title>
        <authorList>
            <person name="Matsuyama A."/>
            <person name="Arai R."/>
            <person name="Yashiroda Y."/>
            <person name="Shirai A."/>
            <person name="Kamata A."/>
            <person name="Sekido S."/>
            <person name="Kobayashi Y."/>
            <person name="Hashimoto A."/>
            <person name="Hamamoto M."/>
            <person name="Hiraoka Y."/>
            <person name="Horinouchi S."/>
            <person name="Yoshida M."/>
        </authorList>
    </citation>
    <scope>SUBCELLULAR LOCATION [LARGE SCALE ANALYSIS]</scope>
</reference>
<reference key="4">
    <citation type="journal article" date="2008" name="J. Proteome Res.">
        <title>Phosphoproteome analysis of fission yeast.</title>
        <authorList>
            <person name="Wilson-Grady J.T."/>
            <person name="Villen J."/>
            <person name="Gygi S.P."/>
        </authorList>
    </citation>
    <scope>PHOSPHORYLATION [LARGE SCALE ANALYSIS] AT SER-1005</scope>
    <scope>IDENTIFICATION BY MASS SPECTROMETRY</scope>
</reference>
<accession>Q9USG8</accession>
<sequence>MSTHSGDSTKQQHYRSSDPYSGRRPIPTIPKFFRDRKQRAEKKEEQQREQTENEKLFDPITQRDVEINDVHFDYAKTYDDPSFTVPNQSIQGSSLPSEKPYLSSNQPTNVYKQHQDDLAPPEADNQITRDVPISDEKTNILFFPSPSIDLSYVSKEVKQKTGQYSLFAYIFSLVISWFFTHSIIISAVLPLAISSCMYLWMQNIYAVAKDAEWGAEQKRGEYARLNLIPESAEWMNHLLEKVWPLINPEMFSSVADQIEDVMQASIPSFVENVRVASLDQGSHPVRVVSIRSLPSGEASESFSEKQASEAEHKDEPEQQRKQFYNFELCLAYHAKPVEDATSTSARASNLHLRIVFYPGIKGTVGFPLPIWVEIKGFVARIRFRCELMPEVPFLKNVTFSLMGLPELNVSAVPVAEGGVNIFGLPLISKFVNDAISAAANEYVSPKSMTIDLSKTLLGDDIKKEVNALGVIFVHINRAEDLSKQDVNGLSDAYITVGFHKFGKPLYCTRVVKQDLNPIWNEYAFIPVFPDQVKAGEKISIELWDSDRFSPDDVVGRTKIGLHLLIQDSGKMHERCDTLTGISEDTSLPGRVFYEIGYFPRAEFKPSLKTSGHDITIPRSMRDDPAFQNPHGSLDNKEEEAAVTTAPDEEYPSGILSFTVHQAVNLQMNHPTGTFGNVSGNYNTSPAQSVGDVTAEEGSELPSSYVCVDLDDTLVYKTRTKVFTSNPIYNAGSEKFVKDWRNAMLCFTVRDFKLREHDSILGVVNIPLATTLTTSSQLTKWYPIQGGIGFGSVRISILFRSMKLKIPRNLLGWDIGTLEFMDRQIVAEGTGSVSDVSFSSIRVNIAGVKITAKSSTSNSSSTAEYHVRSRHAVIPVNNRYRSAVVFEFRKQLQRKHNVFAMVWLVDLEDNVEQNIRVPIFTSSKPAHVLQNMIDFDHPDKESEFKIIGYLSTRICFHRGLDDSHEQLVDNDDEAAIFETYRCLKSMGLRRGYVKDMKNPLADQRASLDESRETTTASSKFESDDSVDTEDEETTTDRTPIECTQTVSMVDPNVNGDIQGRNSLGTMNSNERNLEQEFISLGYASKNRPKAHAQEGTNQPGASENVEPVLADDSDAVTIHSNISSDDQKRKLVNADDRELEKRLHRGPYNSKIVRTGEWVKDGAKMGWRNLRRKFALNGRQPDVETEISK</sequence>
<organism>
    <name type="scientific">Schizosaccharomyces pombe (strain 972 / ATCC 24843)</name>
    <name type="common">Fission yeast</name>
    <dbReference type="NCBI Taxonomy" id="284812"/>
    <lineage>
        <taxon>Eukaryota</taxon>
        <taxon>Fungi</taxon>
        <taxon>Dikarya</taxon>
        <taxon>Ascomycota</taxon>
        <taxon>Taphrinomycotina</taxon>
        <taxon>Schizosaccharomycetes</taxon>
        <taxon>Schizosaccharomycetales</taxon>
        <taxon>Schizosaccharomycetaceae</taxon>
        <taxon>Schizosaccharomyces</taxon>
    </lineage>
</organism>
<evidence type="ECO:0000255" key="1"/>
<evidence type="ECO:0000255" key="2">
    <source>
        <dbReference type="PROSITE-ProRule" id="PRU00041"/>
    </source>
</evidence>
<evidence type="ECO:0000255" key="3">
    <source>
        <dbReference type="PROSITE-ProRule" id="PRU01194"/>
    </source>
</evidence>
<evidence type="ECO:0000256" key="4">
    <source>
        <dbReference type="SAM" id="MobiDB-lite"/>
    </source>
</evidence>
<evidence type="ECO:0000269" key="5">
    <source>
    </source>
</evidence>
<evidence type="ECO:0000269" key="6">
    <source>
    </source>
</evidence>
<evidence type="ECO:0000269" key="7">
    <source>
    </source>
</evidence>
<gene>
    <name type="primary">mug190</name>
    <name type="ORF">SPCP31B10.06</name>
</gene>
<keyword id="KW-0106">Calcium</keyword>
<keyword id="KW-0963">Cytoplasm</keyword>
<keyword id="KW-0206">Cytoskeleton</keyword>
<keyword id="KW-0256">Endoplasmic reticulum</keyword>
<keyword id="KW-0445">Lipid transport</keyword>
<keyword id="KW-0446">Lipid-binding</keyword>
<keyword id="KW-0469">Meiosis</keyword>
<keyword id="KW-0472">Membrane</keyword>
<keyword id="KW-0479">Metal-binding</keyword>
<keyword id="KW-0539">Nucleus</keyword>
<keyword id="KW-0597">Phosphoprotein</keyword>
<keyword id="KW-1185">Reference proteome</keyword>
<keyword id="KW-0677">Repeat</keyword>
<keyword id="KW-0812">Transmembrane</keyword>
<keyword id="KW-1133">Transmembrane helix</keyword>
<keyword id="KW-0813">Transport</keyword>
<protein>
    <recommendedName>
        <fullName>Meiotically up-regulated gene 190 protein</fullName>
    </recommendedName>
</protein>
<feature type="chain" id="PRO_0000278538" description="Meiotically up-regulated gene 190 protein">
    <location>
        <begin position="1"/>
        <end position="1188"/>
    </location>
</feature>
<feature type="transmembrane region" description="Helical" evidence="1">
    <location>
        <begin position="173"/>
        <end position="193"/>
    </location>
</feature>
<feature type="domain" description="SMP-LTD" evidence="3">
    <location>
        <begin position="228"/>
        <end position="453"/>
    </location>
</feature>
<feature type="domain" description="C2 1" evidence="2">
    <location>
        <begin position="451"/>
        <end position="576"/>
    </location>
</feature>
<feature type="domain" description="C2 2" evidence="2">
    <location>
        <begin position="636"/>
        <end position="781"/>
    </location>
</feature>
<feature type="region of interest" description="Disordered" evidence="4">
    <location>
        <begin position="1"/>
        <end position="61"/>
    </location>
</feature>
<feature type="region of interest" description="Disordered" evidence="4">
    <location>
        <begin position="83"/>
        <end position="125"/>
    </location>
</feature>
<feature type="region of interest" description="Disordered" evidence="4">
    <location>
        <begin position="298"/>
        <end position="318"/>
    </location>
</feature>
<feature type="region of interest" description="Disordered" evidence="4">
    <location>
        <begin position="615"/>
        <end position="639"/>
    </location>
</feature>
<feature type="region of interest" description="Disordered" evidence="4">
    <location>
        <begin position="1002"/>
        <end position="1066"/>
    </location>
</feature>
<feature type="compositionally biased region" description="Polar residues" evidence="4">
    <location>
        <begin position="1"/>
        <end position="11"/>
    </location>
</feature>
<feature type="compositionally biased region" description="Basic and acidic residues" evidence="4">
    <location>
        <begin position="41"/>
        <end position="61"/>
    </location>
</feature>
<feature type="compositionally biased region" description="Polar residues" evidence="4">
    <location>
        <begin position="84"/>
        <end position="112"/>
    </location>
</feature>
<feature type="compositionally biased region" description="Basic and acidic residues" evidence="4">
    <location>
        <begin position="302"/>
        <end position="318"/>
    </location>
</feature>
<feature type="compositionally biased region" description="Acidic residues" evidence="4">
    <location>
        <begin position="1022"/>
        <end position="1032"/>
    </location>
</feature>
<feature type="binding site" evidence="2">
    <location>
        <position position="485"/>
    </location>
    <ligand>
        <name>Ca(2+)</name>
        <dbReference type="ChEBI" id="CHEBI:29108"/>
        <label>1</label>
    </ligand>
</feature>
<feature type="binding site" evidence="2">
    <location>
        <position position="485"/>
    </location>
    <ligand>
        <name>Ca(2+)</name>
        <dbReference type="ChEBI" id="CHEBI:29108"/>
        <label>2</label>
    </ligand>
</feature>
<feature type="binding site" evidence="2">
    <location>
        <position position="491"/>
    </location>
    <ligand>
        <name>Ca(2+)</name>
        <dbReference type="ChEBI" id="CHEBI:29108"/>
        <label>1</label>
    </ligand>
</feature>
<feature type="binding site" evidence="2">
    <location>
        <position position="544"/>
    </location>
    <ligand>
        <name>Ca(2+)</name>
        <dbReference type="ChEBI" id="CHEBI:29108"/>
        <label>1</label>
    </ligand>
</feature>
<feature type="binding site" evidence="2">
    <location>
        <position position="544"/>
    </location>
    <ligand>
        <name>Ca(2+)</name>
        <dbReference type="ChEBI" id="CHEBI:29108"/>
        <label>2</label>
    </ligand>
</feature>
<feature type="binding site" evidence="2">
    <location>
        <position position="546"/>
    </location>
    <ligand>
        <name>Ca(2+)</name>
        <dbReference type="ChEBI" id="CHEBI:29108"/>
        <label>1</label>
    </ligand>
</feature>
<feature type="binding site" evidence="2">
    <location>
        <position position="546"/>
    </location>
    <ligand>
        <name>Ca(2+)</name>
        <dbReference type="ChEBI" id="CHEBI:29108"/>
        <label>2</label>
    </ligand>
</feature>
<feature type="binding site" evidence="2">
    <location>
        <position position="546"/>
    </location>
    <ligand>
        <name>Ca(2+)</name>
        <dbReference type="ChEBI" id="CHEBI:29108"/>
        <label>3</label>
    </ligand>
</feature>
<feature type="binding site" evidence="2">
    <location>
        <position position="549"/>
    </location>
    <ligand>
        <name>Ca(2+)</name>
        <dbReference type="ChEBI" id="CHEBI:29108"/>
        <label>3</label>
    </ligand>
</feature>
<feature type="binding site" evidence="2">
    <location>
        <position position="552"/>
    </location>
    <ligand>
        <name>Ca(2+)</name>
        <dbReference type="ChEBI" id="CHEBI:29108"/>
        <label>2</label>
    </ligand>
</feature>
<feature type="binding site" evidence="2">
    <location>
        <position position="552"/>
    </location>
    <ligand>
        <name>Ca(2+)</name>
        <dbReference type="ChEBI" id="CHEBI:29108"/>
        <label>3</label>
    </ligand>
</feature>
<feature type="modified residue" description="Phosphoserine" evidence="7">
    <location>
        <position position="1005"/>
    </location>
</feature>
<name>MU190_SCHPO</name>